<gene>
    <name evidence="1" type="primary">aroL</name>
    <name type="ordered locus">ECP_0447</name>
</gene>
<name>AROL_ECOL5</name>
<feature type="chain" id="PRO_1000067330" description="Shikimate kinase 2">
    <location>
        <begin position="1"/>
        <end position="174"/>
    </location>
</feature>
<feature type="region of interest" description="LID domain">
    <location>
        <begin position="112"/>
        <end position="126"/>
    </location>
</feature>
<feature type="binding site" evidence="1">
    <location>
        <begin position="12"/>
        <end position="17"/>
    </location>
    <ligand>
        <name>ATP</name>
        <dbReference type="ChEBI" id="CHEBI:30616"/>
    </ligand>
</feature>
<feature type="binding site" evidence="1">
    <location>
        <position position="16"/>
    </location>
    <ligand>
        <name>Mg(2+)</name>
        <dbReference type="ChEBI" id="CHEBI:18420"/>
    </ligand>
</feature>
<feature type="binding site" evidence="1">
    <location>
        <position position="32"/>
    </location>
    <ligand>
        <name>Mg(2+)</name>
        <dbReference type="ChEBI" id="CHEBI:18420"/>
    </ligand>
</feature>
<feature type="binding site" evidence="1">
    <location>
        <position position="34"/>
    </location>
    <ligand>
        <name>substrate</name>
    </ligand>
</feature>
<feature type="binding site" evidence="1">
    <location>
        <position position="58"/>
    </location>
    <ligand>
        <name>substrate</name>
    </ligand>
</feature>
<feature type="binding site" evidence="1">
    <location>
        <position position="79"/>
    </location>
    <ligand>
        <name>substrate</name>
    </ligand>
</feature>
<feature type="binding site" evidence="1">
    <location>
        <position position="120"/>
    </location>
    <ligand>
        <name>ATP</name>
        <dbReference type="ChEBI" id="CHEBI:30616"/>
    </ligand>
</feature>
<feature type="binding site" evidence="1">
    <location>
        <position position="139"/>
    </location>
    <ligand>
        <name>substrate</name>
    </ligand>
</feature>
<comment type="function">
    <text evidence="1">Catalyzes the specific phosphorylation of the 3-hydroxyl group of shikimic acid using ATP as a cosubstrate.</text>
</comment>
<comment type="catalytic activity">
    <reaction evidence="1">
        <text>shikimate + ATP = 3-phosphoshikimate + ADP + H(+)</text>
        <dbReference type="Rhea" id="RHEA:13121"/>
        <dbReference type="ChEBI" id="CHEBI:15378"/>
        <dbReference type="ChEBI" id="CHEBI:30616"/>
        <dbReference type="ChEBI" id="CHEBI:36208"/>
        <dbReference type="ChEBI" id="CHEBI:145989"/>
        <dbReference type="ChEBI" id="CHEBI:456216"/>
        <dbReference type="EC" id="2.7.1.71"/>
    </reaction>
</comment>
<comment type="cofactor">
    <cofactor evidence="1">
        <name>Mg(2+)</name>
        <dbReference type="ChEBI" id="CHEBI:18420"/>
    </cofactor>
    <text evidence="1">Binds 1 Mg(2+) ion per subunit.</text>
</comment>
<comment type="pathway">
    <text evidence="1">Metabolic intermediate biosynthesis; chorismate biosynthesis; chorismate from D-erythrose 4-phosphate and phosphoenolpyruvate: step 5/7.</text>
</comment>
<comment type="subunit">
    <text evidence="1">Monomer.</text>
</comment>
<comment type="subcellular location">
    <subcellularLocation>
        <location evidence="1">Cytoplasm</location>
    </subcellularLocation>
</comment>
<comment type="domain">
    <text evidence="1">The LID domain closes over the active site upon ATP binding.</text>
</comment>
<comment type="similarity">
    <text evidence="1">Belongs to the shikimate kinase family. AroL subfamily.</text>
</comment>
<protein>
    <recommendedName>
        <fullName evidence="1">Shikimate kinase 2</fullName>
        <shortName evidence="1">SK 2</shortName>
        <ecNumber evidence="1">2.7.1.71</ecNumber>
    </recommendedName>
</protein>
<proteinExistence type="inferred from homology"/>
<keyword id="KW-0028">Amino-acid biosynthesis</keyword>
<keyword id="KW-0057">Aromatic amino acid biosynthesis</keyword>
<keyword id="KW-0067">ATP-binding</keyword>
<keyword id="KW-0963">Cytoplasm</keyword>
<keyword id="KW-0418">Kinase</keyword>
<keyword id="KW-0460">Magnesium</keyword>
<keyword id="KW-0479">Metal-binding</keyword>
<keyword id="KW-0547">Nucleotide-binding</keyword>
<keyword id="KW-0808">Transferase</keyword>
<organism>
    <name type="scientific">Escherichia coli O6:K15:H31 (strain 536 / UPEC)</name>
    <dbReference type="NCBI Taxonomy" id="362663"/>
    <lineage>
        <taxon>Bacteria</taxon>
        <taxon>Pseudomonadati</taxon>
        <taxon>Pseudomonadota</taxon>
        <taxon>Gammaproteobacteria</taxon>
        <taxon>Enterobacterales</taxon>
        <taxon>Enterobacteriaceae</taxon>
        <taxon>Escherichia</taxon>
    </lineage>
</organism>
<reference key="1">
    <citation type="journal article" date="2006" name="Mol. Microbiol.">
        <title>Role of pathogenicity island-associated integrases in the genome plasticity of uropathogenic Escherichia coli strain 536.</title>
        <authorList>
            <person name="Hochhut B."/>
            <person name="Wilde C."/>
            <person name="Balling G."/>
            <person name="Middendorf B."/>
            <person name="Dobrindt U."/>
            <person name="Brzuszkiewicz E."/>
            <person name="Gottschalk G."/>
            <person name="Carniel E."/>
            <person name="Hacker J."/>
        </authorList>
    </citation>
    <scope>NUCLEOTIDE SEQUENCE [LARGE SCALE GENOMIC DNA]</scope>
    <source>
        <strain>536 / UPEC</strain>
    </source>
</reference>
<dbReference type="EC" id="2.7.1.71" evidence="1"/>
<dbReference type="EMBL" id="CP000247">
    <property type="protein sequence ID" value="ABG68478.1"/>
    <property type="molecule type" value="Genomic_DNA"/>
</dbReference>
<dbReference type="RefSeq" id="WP_000193393.1">
    <property type="nucleotide sequence ID" value="NC_008253.1"/>
</dbReference>
<dbReference type="SMR" id="Q0TKQ3"/>
<dbReference type="GeneID" id="93777073"/>
<dbReference type="KEGG" id="ecp:ECP_0447"/>
<dbReference type="HOGENOM" id="CLU_057607_4_3_6"/>
<dbReference type="UniPathway" id="UPA00053">
    <property type="reaction ID" value="UER00088"/>
</dbReference>
<dbReference type="Proteomes" id="UP000009182">
    <property type="component" value="Chromosome"/>
</dbReference>
<dbReference type="GO" id="GO:0005829">
    <property type="term" value="C:cytosol"/>
    <property type="evidence" value="ECO:0007669"/>
    <property type="project" value="TreeGrafter"/>
</dbReference>
<dbReference type="GO" id="GO:0005524">
    <property type="term" value="F:ATP binding"/>
    <property type="evidence" value="ECO:0007669"/>
    <property type="project" value="UniProtKB-UniRule"/>
</dbReference>
<dbReference type="GO" id="GO:0000287">
    <property type="term" value="F:magnesium ion binding"/>
    <property type="evidence" value="ECO:0007669"/>
    <property type="project" value="UniProtKB-UniRule"/>
</dbReference>
<dbReference type="GO" id="GO:0004765">
    <property type="term" value="F:shikimate kinase activity"/>
    <property type="evidence" value="ECO:0007669"/>
    <property type="project" value="UniProtKB-UniRule"/>
</dbReference>
<dbReference type="GO" id="GO:0008652">
    <property type="term" value="P:amino acid biosynthetic process"/>
    <property type="evidence" value="ECO:0007669"/>
    <property type="project" value="UniProtKB-KW"/>
</dbReference>
<dbReference type="GO" id="GO:0009073">
    <property type="term" value="P:aromatic amino acid family biosynthetic process"/>
    <property type="evidence" value="ECO:0007669"/>
    <property type="project" value="UniProtKB-KW"/>
</dbReference>
<dbReference type="GO" id="GO:0009423">
    <property type="term" value="P:chorismate biosynthetic process"/>
    <property type="evidence" value="ECO:0007669"/>
    <property type="project" value="UniProtKB-UniRule"/>
</dbReference>
<dbReference type="CDD" id="cd00464">
    <property type="entry name" value="SK"/>
    <property type="match status" value="1"/>
</dbReference>
<dbReference type="FunFam" id="3.40.50.300:FF:000408">
    <property type="entry name" value="Shikimate kinase 2"/>
    <property type="match status" value="1"/>
</dbReference>
<dbReference type="Gene3D" id="3.40.50.300">
    <property type="entry name" value="P-loop containing nucleotide triphosphate hydrolases"/>
    <property type="match status" value="1"/>
</dbReference>
<dbReference type="HAMAP" id="MF_00109">
    <property type="entry name" value="Shikimate_kinase"/>
    <property type="match status" value="1"/>
</dbReference>
<dbReference type="HAMAP" id="MF_01269">
    <property type="entry name" value="Shikimate_kinase_2"/>
    <property type="match status" value="1"/>
</dbReference>
<dbReference type="InterPro" id="IPR027417">
    <property type="entry name" value="P-loop_NTPase"/>
</dbReference>
<dbReference type="InterPro" id="IPR031322">
    <property type="entry name" value="Shikimate/glucono_kinase"/>
</dbReference>
<dbReference type="InterPro" id="IPR000623">
    <property type="entry name" value="Shikimate_kinase/TSH1"/>
</dbReference>
<dbReference type="InterPro" id="IPR027544">
    <property type="entry name" value="Shikimate_kinase_2"/>
</dbReference>
<dbReference type="InterPro" id="IPR023000">
    <property type="entry name" value="Shikimate_kinase_CS"/>
</dbReference>
<dbReference type="NCBIfam" id="NF002988">
    <property type="entry name" value="PRK03731.1"/>
    <property type="match status" value="1"/>
</dbReference>
<dbReference type="PANTHER" id="PTHR21087">
    <property type="entry name" value="SHIKIMATE KINASE"/>
    <property type="match status" value="1"/>
</dbReference>
<dbReference type="PANTHER" id="PTHR21087:SF21">
    <property type="entry name" value="SHIKIMATE KINASE 2"/>
    <property type="match status" value="1"/>
</dbReference>
<dbReference type="Pfam" id="PF01202">
    <property type="entry name" value="SKI"/>
    <property type="match status" value="1"/>
</dbReference>
<dbReference type="PRINTS" id="PR01100">
    <property type="entry name" value="SHIKIMTKNASE"/>
</dbReference>
<dbReference type="SUPFAM" id="SSF52540">
    <property type="entry name" value="P-loop containing nucleoside triphosphate hydrolases"/>
    <property type="match status" value="1"/>
</dbReference>
<dbReference type="PROSITE" id="PS01128">
    <property type="entry name" value="SHIKIMATE_KINASE"/>
    <property type="match status" value="1"/>
</dbReference>
<sequence length="174" mass="19151">MTQPLFLIGPRGCGKTTVGMALADSLNRRFVDTDQWLQSQLNMTVAEIVEREEWAGFRARETAALEAVTAPSTVIATGGGIILTEFNRHFMQNNGIVVYLCAPVSVLVNRLQAAPEEDLRPTLTGKPLSEEVQEVLEERDALYREVAHIIIDATNEPSQVISEIRSALAQTINC</sequence>
<evidence type="ECO:0000255" key="1">
    <source>
        <dbReference type="HAMAP-Rule" id="MF_01269"/>
    </source>
</evidence>
<accession>Q0TKQ3</accession>